<keyword id="KW-0143">Chaperone</keyword>
<keyword id="KW-0963">Cytoplasm</keyword>
<keyword id="KW-0694">RNA-binding</keyword>
<comment type="function">
    <text evidence="1">RNA chaperone with significant RNA binding, RNA strand exchange and RNA duplexing activities. May regulate ProP activity through an RNA-based, post-transcriptional mechanism.</text>
</comment>
<comment type="subcellular location">
    <subcellularLocation>
        <location evidence="1">Cytoplasm</location>
    </subcellularLocation>
</comment>
<comment type="similarity">
    <text evidence="1">Belongs to the ProQ family.</text>
</comment>
<proteinExistence type="inferred from homology"/>
<gene>
    <name evidence="1" type="primary">proQ</name>
    <name type="ordered locus">ECIAI1_1902</name>
</gene>
<feature type="chain" id="PRO_1000133292" description="RNA chaperone ProQ">
    <location>
        <begin position="1"/>
        <end position="217"/>
    </location>
</feature>
<feature type="region of interest" description="Disordered" evidence="2">
    <location>
        <begin position="105"/>
        <end position="166"/>
    </location>
</feature>
<feature type="compositionally biased region" description="Basic residues" evidence="2">
    <location>
        <begin position="121"/>
        <end position="131"/>
    </location>
</feature>
<feature type="compositionally biased region" description="Basic and acidic residues" evidence="2">
    <location>
        <begin position="132"/>
        <end position="162"/>
    </location>
</feature>
<sequence>MENQPKLNSSKEVIAFLAERFPHCFSAEGEARPLKIGIFQDLVDRVAGEMNLSKTQLRSALRLYTSSWRYLYGVKPGATRVDLDGNPCGELDEQHVEHARKQLEEAKARVQAQRAEQQAKKRERKPRPTTPRRKEGAERKPRAQKPVEKAPKTVKAPREEQHTPVSDISALTVGQALKVKAGQNAMDATVLEITKDGVRVQLNSGMSLIVRAEHLVF</sequence>
<dbReference type="EMBL" id="CU928160">
    <property type="protein sequence ID" value="CAQ98756.1"/>
    <property type="molecule type" value="Genomic_DNA"/>
</dbReference>
<dbReference type="RefSeq" id="WP_000431385.1">
    <property type="nucleotide sequence ID" value="NC_011741.1"/>
</dbReference>
<dbReference type="SMR" id="B7M2A7"/>
<dbReference type="KEGG" id="ecr:ECIAI1_1902"/>
<dbReference type="HOGENOM" id="CLU_113254_0_0_6"/>
<dbReference type="GO" id="GO:0005829">
    <property type="term" value="C:cytosol"/>
    <property type="evidence" value="ECO:0007669"/>
    <property type="project" value="TreeGrafter"/>
</dbReference>
<dbReference type="GO" id="GO:0033592">
    <property type="term" value="F:RNA strand annealing activity"/>
    <property type="evidence" value="ECO:0007669"/>
    <property type="project" value="UniProtKB-UniRule"/>
</dbReference>
<dbReference type="GO" id="GO:0034057">
    <property type="term" value="F:RNA strand-exchange activity"/>
    <property type="evidence" value="ECO:0007669"/>
    <property type="project" value="UniProtKB-UniRule"/>
</dbReference>
<dbReference type="GO" id="GO:0010608">
    <property type="term" value="P:post-transcriptional regulation of gene expression"/>
    <property type="evidence" value="ECO:0007669"/>
    <property type="project" value="InterPro"/>
</dbReference>
<dbReference type="FunFam" id="1.10.1710.10:FF:000001">
    <property type="entry name" value="RNA chaperone ProQ"/>
    <property type="match status" value="1"/>
</dbReference>
<dbReference type="Gene3D" id="1.10.1710.10">
    <property type="entry name" value="ProQ/FinO domain"/>
    <property type="match status" value="1"/>
</dbReference>
<dbReference type="HAMAP" id="MF_00749">
    <property type="entry name" value="ProQ"/>
    <property type="match status" value="1"/>
</dbReference>
<dbReference type="InterPro" id="IPR023529">
    <property type="entry name" value="ProQ"/>
</dbReference>
<dbReference type="InterPro" id="IPR016103">
    <property type="entry name" value="ProQ/FinO"/>
</dbReference>
<dbReference type="InterPro" id="IPR036442">
    <property type="entry name" value="ProQ/FinO_sf"/>
</dbReference>
<dbReference type="InterPro" id="IPR035236">
    <property type="entry name" value="ProQ_C"/>
</dbReference>
<dbReference type="NCBIfam" id="NF003434">
    <property type="entry name" value="PRK04950.1"/>
    <property type="match status" value="1"/>
</dbReference>
<dbReference type="PANTHER" id="PTHR38106">
    <property type="entry name" value="RNA CHAPERONE PROQ"/>
    <property type="match status" value="1"/>
</dbReference>
<dbReference type="PANTHER" id="PTHR38106:SF1">
    <property type="entry name" value="RNA CHAPERONE PROQ"/>
    <property type="match status" value="1"/>
</dbReference>
<dbReference type="Pfam" id="PF04352">
    <property type="entry name" value="ProQ"/>
    <property type="match status" value="1"/>
</dbReference>
<dbReference type="Pfam" id="PF17516">
    <property type="entry name" value="ProQ_C"/>
    <property type="match status" value="1"/>
</dbReference>
<dbReference type="SMART" id="SM00945">
    <property type="entry name" value="ProQ"/>
    <property type="match status" value="1"/>
</dbReference>
<dbReference type="SUPFAM" id="SSF48657">
    <property type="entry name" value="FinO-like"/>
    <property type="match status" value="1"/>
</dbReference>
<evidence type="ECO:0000255" key="1">
    <source>
        <dbReference type="HAMAP-Rule" id="MF_00749"/>
    </source>
</evidence>
<evidence type="ECO:0000256" key="2">
    <source>
        <dbReference type="SAM" id="MobiDB-lite"/>
    </source>
</evidence>
<accession>B7M2A7</accession>
<reference key="1">
    <citation type="journal article" date="2009" name="PLoS Genet.">
        <title>Organised genome dynamics in the Escherichia coli species results in highly diverse adaptive paths.</title>
        <authorList>
            <person name="Touchon M."/>
            <person name="Hoede C."/>
            <person name="Tenaillon O."/>
            <person name="Barbe V."/>
            <person name="Baeriswyl S."/>
            <person name="Bidet P."/>
            <person name="Bingen E."/>
            <person name="Bonacorsi S."/>
            <person name="Bouchier C."/>
            <person name="Bouvet O."/>
            <person name="Calteau A."/>
            <person name="Chiapello H."/>
            <person name="Clermont O."/>
            <person name="Cruveiller S."/>
            <person name="Danchin A."/>
            <person name="Diard M."/>
            <person name="Dossat C."/>
            <person name="Karoui M.E."/>
            <person name="Frapy E."/>
            <person name="Garry L."/>
            <person name="Ghigo J.M."/>
            <person name="Gilles A.M."/>
            <person name="Johnson J."/>
            <person name="Le Bouguenec C."/>
            <person name="Lescat M."/>
            <person name="Mangenot S."/>
            <person name="Martinez-Jehanne V."/>
            <person name="Matic I."/>
            <person name="Nassif X."/>
            <person name="Oztas S."/>
            <person name="Petit M.A."/>
            <person name="Pichon C."/>
            <person name="Rouy Z."/>
            <person name="Ruf C.S."/>
            <person name="Schneider D."/>
            <person name="Tourret J."/>
            <person name="Vacherie B."/>
            <person name="Vallenet D."/>
            <person name="Medigue C."/>
            <person name="Rocha E.P.C."/>
            <person name="Denamur E."/>
        </authorList>
    </citation>
    <scope>NUCLEOTIDE SEQUENCE [LARGE SCALE GENOMIC DNA]</scope>
    <source>
        <strain>IAI1</strain>
    </source>
</reference>
<protein>
    <recommendedName>
        <fullName evidence="1">RNA chaperone ProQ</fullName>
    </recommendedName>
</protein>
<name>PROQ_ECO8A</name>
<organism>
    <name type="scientific">Escherichia coli O8 (strain IAI1)</name>
    <dbReference type="NCBI Taxonomy" id="585034"/>
    <lineage>
        <taxon>Bacteria</taxon>
        <taxon>Pseudomonadati</taxon>
        <taxon>Pseudomonadota</taxon>
        <taxon>Gammaproteobacteria</taxon>
        <taxon>Enterobacterales</taxon>
        <taxon>Enterobacteriaceae</taxon>
        <taxon>Escherichia</taxon>
    </lineage>
</organism>